<keyword id="KW-0963">Cytoplasm</keyword>
<keyword id="KW-0521">NADP</keyword>
<keyword id="KW-0560">Oxidoreductase</keyword>
<keyword id="KW-0671">Queuosine biosynthesis</keyword>
<keyword id="KW-1185">Reference proteome</keyword>
<reference key="1">
    <citation type="journal article" date="2002" name="Nat. Biotechnol.">
        <title>Genome sequence of the dissimilatory metal ion-reducing bacterium Shewanella oneidensis.</title>
        <authorList>
            <person name="Heidelberg J.F."/>
            <person name="Paulsen I.T."/>
            <person name="Nelson K.E."/>
            <person name="Gaidos E.J."/>
            <person name="Nelson W.C."/>
            <person name="Read T.D."/>
            <person name="Eisen J.A."/>
            <person name="Seshadri R."/>
            <person name="Ward N.L."/>
            <person name="Methe B.A."/>
            <person name="Clayton R.A."/>
            <person name="Meyer T."/>
            <person name="Tsapin A."/>
            <person name="Scott J."/>
            <person name="Beanan M.J."/>
            <person name="Brinkac L.M."/>
            <person name="Daugherty S.C."/>
            <person name="DeBoy R.T."/>
            <person name="Dodson R.J."/>
            <person name="Durkin A.S."/>
            <person name="Haft D.H."/>
            <person name="Kolonay J.F."/>
            <person name="Madupu R."/>
            <person name="Peterson J.D."/>
            <person name="Umayam L.A."/>
            <person name="White O."/>
            <person name="Wolf A.M."/>
            <person name="Vamathevan J.J."/>
            <person name="Weidman J.F."/>
            <person name="Impraim M."/>
            <person name="Lee K."/>
            <person name="Berry K.J."/>
            <person name="Lee C."/>
            <person name="Mueller J."/>
            <person name="Khouri H.M."/>
            <person name="Gill J."/>
            <person name="Utterback T.R."/>
            <person name="McDonald L.A."/>
            <person name="Feldblyum T.V."/>
            <person name="Smith H.O."/>
            <person name="Venter J.C."/>
            <person name="Nealson K.H."/>
            <person name="Fraser C.M."/>
        </authorList>
    </citation>
    <scope>NUCLEOTIDE SEQUENCE [LARGE SCALE GENOMIC DNA]</scope>
    <source>
        <strain>ATCC 700550 / JCM 31522 / CIP 106686 / LMG 19005 / NCIMB 14063 / MR-1</strain>
    </source>
</reference>
<name>QUEF_SHEON</name>
<feature type="chain" id="PRO_0000163060" description="NADPH-dependent 7-cyano-7-deazaguanine reductase">
    <location>
        <begin position="1"/>
        <end position="286"/>
    </location>
</feature>
<feature type="active site" description="Thioimide intermediate" evidence="1">
    <location>
        <position position="194"/>
    </location>
</feature>
<feature type="active site" description="Proton donor" evidence="1">
    <location>
        <position position="201"/>
    </location>
</feature>
<feature type="binding site" evidence="1">
    <location>
        <begin position="92"/>
        <end position="94"/>
    </location>
    <ligand>
        <name>substrate</name>
    </ligand>
</feature>
<feature type="binding site" evidence="1">
    <location>
        <begin position="94"/>
        <end position="95"/>
    </location>
    <ligand>
        <name>NADPH</name>
        <dbReference type="ChEBI" id="CHEBI:57783"/>
    </ligand>
</feature>
<feature type="binding site" evidence="1">
    <location>
        <begin position="233"/>
        <end position="234"/>
    </location>
    <ligand>
        <name>substrate</name>
    </ligand>
</feature>
<feature type="binding site" evidence="1">
    <location>
        <begin position="262"/>
        <end position="263"/>
    </location>
    <ligand>
        <name>NADPH</name>
        <dbReference type="ChEBI" id="CHEBI:57783"/>
    </ligand>
</feature>
<evidence type="ECO:0000255" key="1">
    <source>
        <dbReference type="HAMAP-Rule" id="MF_00817"/>
    </source>
</evidence>
<protein>
    <recommendedName>
        <fullName evidence="1">NADPH-dependent 7-cyano-7-deazaguanine reductase</fullName>
        <ecNumber evidence="1">1.7.1.13</ecNumber>
    </recommendedName>
    <alternativeName>
        <fullName evidence="1">7-cyano-7-carbaguanine reductase</fullName>
    </alternativeName>
    <alternativeName>
        <fullName evidence="1">NADPH-dependent nitrile oxidoreductase</fullName>
    </alternativeName>
    <alternativeName>
        <fullName evidence="1">PreQ(0) reductase</fullName>
    </alternativeName>
</protein>
<accession>Q8EGJ4</accession>
<sequence length="286" mass="32624">MTQNHDPYSDAKELAGLTLGKATDYQAEYDASLLQGVPRSLNRNAINLTAESLPFHGADIWTAYELSWLNAKGKPMVAIADIQLSHASQNLIESKSFKLYLNSFNQTKFDNLDAVQKTLVKDLSECAQGDVTVKIIEPKSFGIQRVVELPGTCIDDLDIEVSDYDFNPEYLENSTDEKQIVAETLNSNLLKSNCLITSQPDWGSVMIRYQGPKIDREKLLRYLISFRQHNEFHEQCVERIFVDLKHYCHCAKLTVYARYTRRGGLDINPYRSDFEHPGESHRLARQ</sequence>
<organism>
    <name type="scientific">Shewanella oneidensis (strain ATCC 700550 / JCM 31522 / CIP 106686 / LMG 19005 / NCIMB 14063 / MR-1)</name>
    <dbReference type="NCBI Taxonomy" id="211586"/>
    <lineage>
        <taxon>Bacteria</taxon>
        <taxon>Pseudomonadati</taxon>
        <taxon>Pseudomonadota</taxon>
        <taxon>Gammaproteobacteria</taxon>
        <taxon>Alteromonadales</taxon>
        <taxon>Shewanellaceae</taxon>
        <taxon>Shewanella</taxon>
    </lineage>
</organism>
<dbReference type="EC" id="1.7.1.13" evidence="1"/>
<dbReference type="EMBL" id="AE014299">
    <property type="protein sequence ID" value="AAN54664.2"/>
    <property type="molecule type" value="Genomic_DNA"/>
</dbReference>
<dbReference type="RefSeq" id="NP_717220.2">
    <property type="nucleotide sequence ID" value="NC_004347.2"/>
</dbReference>
<dbReference type="RefSeq" id="WP_011071765.1">
    <property type="nucleotide sequence ID" value="NC_004347.2"/>
</dbReference>
<dbReference type="SMR" id="Q8EGJ4"/>
<dbReference type="STRING" id="211586.SO_1608"/>
<dbReference type="PaxDb" id="211586-SO_1608"/>
<dbReference type="KEGG" id="son:SO_1608"/>
<dbReference type="PATRIC" id="fig|211586.12.peg.1546"/>
<dbReference type="eggNOG" id="COG0780">
    <property type="taxonomic scope" value="Bacteria"/>
</dbReference>
<dbReference type="eggNOG" id="COG2904">
    <property type="taxonomic scope" value="Bacteria"/>
</dbReference>
<dbReference type="HOGENOM" id="CLU_054738_0_0_6"/>
<dbReference type="OrthoDB" id="9789995at2"/>
<dbReference type="PhylomeDB" id="Q8EGJ4"/>
<dbReference type="BioCyc" id="SONE211586:G1GMP-1476-MONOMER"/>
<dbReference type="UniPathway" id="UPA00392"/>
<dbReference type="Proteomes" id="UP000008186">
    <property type="component" value="Chromosome"/>
</dbReference>
<dbReference type="GO" id="GO:0005829">
    <property type="term" value="C:cytosol"/>
    <property type="evidence" value="ECO:0000318"/>
    <property type="project" value="GO_Central"/>
</dbReference>
<dbReference type="GO" id="GO:0033739">
    <property type="term" value="F:preQ1 synthase activity"/>
    <property type="evidence" value="ECO:0000318"/>
    <property type="project" value="GO_Central"/>
</dbReference>
<dbReference type="GO" id="GO:0008616">
    <property type="term" value="P:queuosine biosynthetic process"/>
    <property type="evidence" value="ECO:0000318"/>
    <property type="project" value="GO_Central"/>
</dbReference>
<dbReference type="GO" id="GO:0006400">
    <property type="term" value="P:tRNA modification"/>
    <property type="evidence" value="ECO:0007669"/>
    <property type="project" value="UniProtKB-UniRule"/>
</dbReference>
<dbReference type="Gene3D" id="3.30.1130.10">
    <property type="match status" value="2"/>
</dbReference>
<dbReference type="HAMAP" id="MF_00817">
    <property type="entry name" value="QueF_type2"/>
    <property type="match status" value="1"/>
</dbReference>
<dbReference type="InterPro" id="IPR043133">
    <property type="entry name" value="GTP-CH-I_C/QueF"/>
</dbReference>
<dbReference type="InterPro" id="IPR050084">
    <property type="entry name" value="NADPH_dep_7-cyano-7-deazaG_red"/>
</dbReference>
<dbReference type="InterPro" id="IPR029500">
    <property type="entry name" value="QueF"/>
</dbReference>
<dbReference type="InterPro" id="IPR029139">
    <property type="entry name" value="QueF_N"/>
</dbReference>
<dbReference type="InterPro" id="IPR016428">
    <property type="entry name" value="QueF_type2"/>
</dbReference>
<dbReference type="NCBIfam" id="TIGR03138">
    <property type="entry name" value="QueF"/>
    <property type="match status" value="1"/>
</dbReference>
<dbReference type="PANTHER" id="PTHR34354">
    <property type="entry name" value="NADPH-DEPENDENT 7-CYANO-7-DEAZAGUANINE REDUCTASE"/>
    <property type="match status" value="1"/>
</dbReference>
<dbReference type="PANTHER" id="PTHR34354:SF1">
    <property type="entry name" value="NADPH-DEPENDENT 7-CYANO-7-DEAZAGUANINE REDUCTASE"/>
    <property type="match status" value="1"/>
</dbReference>
<dbReference type="Pfam" id="PF14489">
    <property type="entry name" value="QueF"/>
    <property type="match status" value="1"/>
</dbReference>
<dbReference type="Pfam" id="PF14819">
    <property type="entry name" value="QueF_N"/>
    <property type="match status" value="1"/>
</dbReference>
<dbReference type="PIRSF" id="PIRSF004750">
    <property type="entry name" value="Nitrile_oxidored_YqcD_prd"/>
    <property type="match status" value="1"/>
</dbReference>
<dbReference type="SUPFAM" id="SSF55620">
    <property type="entry name" value="Tetrahydrobiopterin biosynthesis enzymes-like"/>
    <property type="match status" value="1"/>
</dbReference>
<gene>
    <name evidence="1" type="primary">queF</name>
    <name type="ordered locus">SO_1608</name>
</gene>
<proteinExistence type="inferred from homology"/>
<comment type="function">
    <text evidence="1">Catalyzes the NADPH-dependent reduction of 7-cyano-7-deazaguanine (preQ0) to 7-aminomethyl-7-deazaguanine (preQ1).</text>
</comment>
<comment type="catalytic activity">
    <reaction evidence="1">
        <text>7-aminomethyl-7-carbaguanine + 2 NADP(+) = 7-cyano-7-deazaguanine + 2 NADPH + 3 H(+)</text>
        <dbReference type="Rhea" id="RHEA:13409"/>
        <dbReference type="ChEBI" id="CHEBI:15378"/>
        <dbReference type="ChEBI" id="CHEBI:45075"/>
        <dbReference type="ChEBI" id="CHEBI:57783"/>
        <dbReference type="ChEBI" id="CHEBI:58349"/>
        <dbReference type="ChEBI" id="CHEBI:58703"/>
        <dbReference type="EC" id="1.7.1.13"/>
    </reaction>
</comment>
<comment type="pathway">
    <text evidence="1">tRNA modification; tRNA-queuosine biosynthesis.</text>
</comment>
<comment type="subunit">
    <text evidence="1">Homodimer.</text>
</comment>
<comment type="subcellular location">
    <subcellularLocation>
        <location evidence="1">Cytoplasm</location>
    </subcellularLocation>
</comment>
<comment type="similarity">
    <text evidence="1">Belongs to the GTP cyclohydrolase I family. QueF type 2 subfamily.</text>
</comment>